<comment type="function">
    <text>Potential calcium-dependent cell-adhesion protein. May be involved in the establishment and maintenance of specific neuronal connections in the brain.</text>
</comment>
<comment type="subcellular location">
    <subcellularLocation>
        <location evidence="1">Cell membrane</location>
        <topology evidence="1">Single-pass type I membrane protein</topology>
    </subcellularLocation>
</comment>
<reference key="1">
    <citation type="journal article" date="2005" name="Nature">
        <title>Initial sequence of the chimpanzee genome and comparison with the human genome.</title>
        <authorList>
            <consortium name="Chimpanzee sequencing and analysis consortium"/>
        </authorList>
    </citation>
    <scope>NUCLEOTIDE SEQUENCE [LARGE SCALE GENOMIC DNA]</scope>
</reference>
<reference key="2">
    <citation type="journal article" date="2005" name="Genetics">
        <title>Comparative genomics and diversifying selection of the clustered vertebrate protocadherin genes.</title>
        <authorList>
            <person name="Wu Q."/>
        </authorList>
    </citation>
    <scope>IDENTIFICATION</scope>
</reference>
<protein>
    <recommendedName>
        <fullName>Protocadherin alpha-12</fullName>
        <shortName>PCDH-alpha-12</shortName>
    </recommendedName>
</protein>
<accession>Q5DRF2</accession>
<gene>
    <name type="primary">PCDHA12</name>
</gene>
<proteinExistence type="inferred from homology"/>
<name>PCDAC_PANTR</name>
<dbReference type="SMR" id="Q5DRF2"/>
<dbReference type="FunCoup" id="Q5DRF2">
    <property type="interactions" value="52"/>
</dbReference>
<dbReference type="GlyCosmos" id="Q5DRF2">
    <property type="glycosylation" value="3 sites, No reported glycans"/>
</dbReference>
<dbReference type="InParanoid" id="Q5DRF2"/>
<dbReference type="Proteomes" id="UP000002277">
    <property type="component" value="Unplaced"/>
</dbReference>
<dbReference type="GO" id="GO:0005886">
    <property type="term" value="C:plasma membrane"/>
    <property type="evidence" value="ECO:0000318"/>
    <property type="project" value="GO_Central"/>
</dbReference>
<dbReference type="GO" id="GO:0005509">
    <property type="term" value="F:calcium ion binding"/>
    <property type="evidence" value="ECO:0007669"/>
    <property type="project" value="InterPro"/>
</dbReference>
<dbReference type="GO" id="GO:0007155">
    <property type="term" value="P:cell adhesion"/>
    <property type="evidence" value="ECO:0000318"/>
    <property type="project" value="GO_Central"/>
</dbReference>
<dbReference type="GO" id="GO:0007156">
    <property type="term" value="P:homophilic cell adhesion via plasma membrane adhesion molecules"/>
    <property type="evidence" value="ECO:0007669"/>
    <property type="project" value="InterPro"/>
</dbReference>
<dbReference type="GO" id="GO:0007399">
    <property type="term" value="P:nervous system development"/>
    <property type="evidence" value="ECO:0007669"/>
    <property type="project" value="UniProtKB-ARBA"/>
</dbReference>
<dbReference type="CDD" id="cd11304">
    <property type="entry name" value="Cadherin_repeat"/>
    <property type="match status" value="6"/>
</dbReference>
<dbReference type="FunFam" id="2.60.40.60:FF:000001">
    <property type="entry name" value="Protocadherin alpha 2"/>
    <property type="match status" value="1"/>
</dbReference>
<dbReference type="FunFam" id="2.60.40.60:FF:000002">
    <property type="entry name" value="Protocadherin alpha 2"/>
    <property type="match status" value="1"/>
</dbReference>
<dbReference type="FunFam" id="2.60.40.60:FF:000003">
    <property type="entry name" value="Protocadherin alpha 2"/>
    <property type="match status" value="1"/>
</dbReference>
<dbReference type="FunFam" id="2.60.40.60:FF:000006">
    <property type="entry name" value="Protocadherin alpha 2"/>
    <property type="match status" value="1"/>
</dbReference>
<dbReference type="FunFam" id="2.60.40.60:FF:000007">
    <property type="entry name" value="Protocadherin alpha 2"/>
    <property type="match status" value="1"/>
</dbReference>
<dbReference type="FunFam" id="2.60.40.60:FF:000076">
    <property type="entry name" value="Protocadherin alpha 2"/>
    <property type="match status" value="1"/>
</dbReference>
<dbReference type="Gene3D" id="2.60.40.60">
    <property type="entry name" value="Cadherins"/>
    <property type="match status" value="6"/>
</dbReference>
<dbReference type="InterPro" id="IPR002126">
    <property type="entry name" value="Cadherin-like_dom"/>
</dbReference>
<dbReference type="InterPro" id="IPR015919">
    <property type="entry name" value="Cadherin-like_sf"/>
</dbReference>
<dbReference type="InterPro" id="IPR031904">
    <property type="entry name" value="Cadherin_CBD"/>
</dbReference>
<dbReference type="InterPro" id="IPR020894">
    <property type="entry name" value="Cadherin_CS"/>
</dbReference>
<dbReference type="InterPro" id="IPR013164">
    <property type="entry name" value="Cadherin_N"/>
</dbReference>
<dbReference type="InterPro" id="IPR050174">
    <property type="entry name" value="Protocadherin/Cadherin-CA"/>
</dbReference>
<dbReference type="PANTHER" id="PTHR24028">
    <property type="entry name" value="CADHERIN-87A"/>
    <property type="match status" value="1"/>
</dbReference>
<dbReference type="PANTHER" id="PTHR24028:SF76">
    <property type="entry name" value="PROTOCADHERIN ALPHA-12"/>
    <property type="match status" value="1"/>
</dbReference>
<dbReference type="Pfam" id="PF00028">
    <property type="entry name" value="Cadherin"/>
    <property type="match status" value="5"/>
</dbReference>
<dbReference type="Pfam" id="PF08266">
    <property type="entry name" value="Cadherin_2"/>
    <property type="match status" value="1"/>
</dbReference>
<dbReference type="Pfam" id="PF15974">
    <property type="entry name" value="Cadherin_tail"/>
    <property type="match status" value="1"/>
</dbReference>
<dbReference type="PRINTS" id="PR00205">
    <property type="entry name" value="CADHERIN"/>
</dbReference>
<dbReference type="SMART" id="SM00112">
    <property type="entry name" value="CA"/>
    <property type="match status" value="6"/>
</dbReference>
<dbReference type="SUPFAM" id="SSF49313">
    <property type="entry name" value="Cadherin-like"/>
    <property type="match status" value="6"/>
</dbReference>
<dbReference type="PROSITE" id="PS00232">
    <property type="entry name" value="CADHERIN_1"/>
    <property type="match status" value="5"/>
</dbReference>
<dbReference type="PROSITE" id="PS50268">
    <property type="entry name" value="CADHERIN_2"/>
    <property type="match status" value="6"/>
</dbReference>
<sequence length="941" mass="101631">MVIIGPRGPGSQRLLLSLLLLAAWEVGSGQLHYSVYEEAKHGTFVGRIAQDLGLELAELVPRLFRVASKRHGDLLEVNLQNGILFVNSRIDREKLCGRSAECSIHLEVIVDRPLQVFHVDVEVKDINDNPPVFREREQKVPVSESAPLDSHFPLEGASDADIGVNSLLTYALSLNEHFELKIKTKKDKSILPELVLRKLLDREQTPKLNLLLMVIDGGKPELTGSVQIQITVLDVNDNGPAFDKPSYKVVLSENVQNDTRVIQLNASDPDEGLNGEISYGIKMILPVSEKCMFSINPDTGEIRIYGELDFEENNAYEIQVNAIDKGIPSMAGHSMVLVEVLDVNDNVPEVMVTSLSLPVQEDAQVGTVIALISVSDRDSGANGQVICSLTPHVPFKLVSTYKNYYSLVLDSALDRESVSAYELVVTARDGGSPSLWATARVSVEVADVNDNAPAFAQPEYTVFVKENNPPGCHIFTVSAWDADAQKNALVSYSLVERRVGEHALSSYVSVHAESGKVYALQPLDHEELELLQFQVSARDAGVPPLGSNVTLQVFVLDENDNAPALLATPAGSAGGAVSELVPRSVGAGHVVAKVRAVDADSGYNAWLSYELQPAAVGAHIPFHVGLYTGEISTTRILDEADAPRHRLLVLVKDHGEPALTSTATVLVSLVENGQAPKTSSRASVGAVDPEAALVDINVYLIIAICAVSSLLVLTLLLYTALRCSAPPTVSRCAPGKPTLVCSSAVGSWSYSQQRRQRVCSGESPPKTDLMAFSPSLQLSREDCLNPPSEPRQPNPDWRYSASLRAGMHSSVHLEEAGILRAGPGGPDQQWPTVSSATPEPEAGEVSPPVGAGVNSNSWTFKYGPGNPKQSGPGELPDKFIIPGSPAIISIRQEPANSQIDKSDFITFGKKEETKKKKKKKKGNKTQEKKEKGNSTTDNSDQ</sequence>
<feature type="signal peptide" evidence="2">
    <location>
        <begin position="1"/>
        <end position="29"/>
    </location>
</feature>
<feature type="chain" id="PRO_0000003907" description="Protocadherin alpha-12">
    <location>
        <begin position="30"/>
        <end position="941"/>
    </location>
</feature>
<feature type="topological domain" description="Extracellular" evidence="2">
    <location>
        <begin position="30"/>
        <end position="697"/>
    </location>
</feature>
<feature type="transmembrane region" description="Helical" evidence="2">
    <location>
        <begin position="698"/>
        <end position="718"/>
    </location>
</feature>
<feature type="topological domain" description="Cytoplasmic" evidence="2">
    <location>
        <begin position="719"/>
        <end position="941"/>
    </location>
</feature>
<feature type="domain" description="Cadherin 1" evidence="3">
    <location>
        <begin position="30"/>
        <end position="133"/>
    </location>
</feature>
<feature type="domain" description="Cadherin 2" evidence="3">
    <location>
        <begin position="134"/>
        <end position="242"/>
    </location>
</feature>
<feature type="domain" description="Cadherin 3" evidence="3">
    <location>
        <begin position="243"/>
        <end position="350"/>
    </location>
</feature>
<feature type="domain" description="Cadherin 4" evidence="3">
    <location>
        <begin position="351"/>
        <end position="455"/>
    </location>
</feature>
<feature type="domain" description="Cadherin 5" evidence="3">
    <location>
        <begin position="456"/>
        <end position="565"/>
    </location>
</feature>
<feature type="domain" description="Cadherin 6" evidence="3">
    <location>
        <begin position="581"/>
        <end position="678"/>
    </location>
</feature>
<feature type="repeat" description="PXXP 1">
    <location>
        <begin position="734"/>
        <end position="737"/>
    </location>
</feature>
<feature type="repeat" description="PXXP 2">
    <location>
        <begin position="790"/>
        <end position="793"/>
    </location>
</feature>
<feature type="repeat" description="PXXP 3">
    <location>
        <begin position="823"/>
        <end position="826"/>
    </location>
</feature>
<feature type="repeat" description="PXXP 4">
    <location>
        <begin position="863"/>
        <end position="866"/>
    </location>
</feature>
<feature type="repeat" description="PXXP 5">
    <location>
        <begin position="882"/>
        <end position="885"/>
    </location>
</feature>
<feature type="region of interest" description="5 X 4 AA repeats of P-X-X-P">
    <location>
        <begin position="734"/>
        <end position="885"/>
    </location>
</feature>
<feature type="region of interest" description="Disordered" evidence="4">
    <location>
        <begin position="818"/>
        <end position="941"/>
    </location>
</feature>
<feature type="compositionally biased region" description="Basic and acidic residues" evidence="4">
    <location>
        <begin position="900"/>
        <end position="914"/>
    </location>
</feature>
<feature type="glycosylation site" description="N-linked (GlcNAc...) asparagine" evidence="2">
    <location>
        <position position="257"/>
    </location>
</feature>
<feature type="glycosylation site" description="N-linked (GlcNAc...) asparagine" evidence="2">
    <location>
        <position position="265"/>
    </location>
</feature>
<feature type="glycosylation site" description="N-linked (GlcNAc...) asparagine" evidence="2">
    <location>
        <position position="548"/>
    </location>
</feature>
<keyword id="KW-0106">Calcium</keyword>
<keyword id="KW-0130">Cell adhesion</keyword>
<keyword id="KW-1003">Cell membrane</keyword>
<keyword id="KW-0325">Glycoprotein</keyword>
<keyword id="KW-0472">Membrane</keyword>
<keyword id="KW-1185">Reference proteome</keyword>
<keyword id="KW-0677">Repeat</keyword>
<keyword id="KW-0732">Signal</keyword>
<keyword id="KW-0812">Transmembrane</keyword>
<keyword id="KW-1133">Transmembrane helix</keyword>
<evidence type="ECO:0000250" key="1"/>
<evidence type="ECO:0000255" key="2"/>
<evidence type="ECO:0000255" key="3">
    <source>
        <dbReference type="PROSITE-ProRule" id="PRU00043"/>
    </source>
</evidence>
<evidence type="ECO:0000256" key="4">
    <source>
        <dbReference type="SAM" id="MobiDB-lite"/>
    </source>
</evidence>
<organism>
    <name type="scientific">Pan troglodytes</name>
    <name type="common">Chimpanzee</name>
    <dbReference type="NCBI Taxonomy" id="9598"/>
    <lineage>
        <taxon>Eukaryota</taxon>
        <taxon>Metazoa</taxon>
        <taxon>Chordata</taxon>
        <taxon>Craniata</taxon>
        <taxon>Vertebrata</taxon>
        <taxon>Euteleostomi</taxon>
        <taxon>Mammalia</taxon>
        <taxon>Eutheria</taxon>
        <taxon>Euarchontoglires</taxon>
        <taxon>Primates</taxon>
        <taxon>Haplorrhini</taxon>
        <taxon>Catarrhini</taxon>
        <taxon>Hominidae</taxon>
        <taxon>Pan</taxon>
    </lineage>
</organism>